<gene>
    <name evidence="6" type="primary">IWS1</name>
    <name type="synonym">HIN9</name>
    <name evidence="6" type="synonym">SEB1</name>
    <name evidence="8 10" type="ordered locus">At1g32130</name>
    <name evidence="9" type="ORF">F3C3.8</name>
</gene>
<feature type="chain" id="PRO_0000437492" description="Protein IWS1 homolog 1">
    <location>
        <begin position="1"/>
        <end position="502"/>
    </location>
</feature>
<feature type="domain" description="TFIIS N-terminal" evidence="1">
    <location>
        <begin position="287"/>
        <end position="370"/>
    </location>
</feature>
<feature type="region of interest" description="Disordered" evidence="2">
    <location>
        <begin position="1"/>
        <end position="61"/>
    </location>
</feature>
<feature type="region of interest" description="Disordered" evidence="2">
    <location>
        <begin position="87"/>
        <end position="208"/>
    </location>
</feature>
<feature type="region of interest" description="Disordered" evidence="2">
    <location>
        <begin position="385"/>
        <end position="434"/>
    </location>
</feature>
<feature type="compositionally biased region" description="Basic and acidic residues" evidence="2">
    <location>
        <begin position="1"/>
        <end position="12"/>
    </location>
</feature>
<feature type="compositionally biased region" description="Acidic residues" evidence="2">
    <location>
        <begin position="13"/>
        <end position="22"/>
    </location>
</feature>
<feature type="compositionally biased region" description="Acidic residues" evidence="2">
    <location>
        <begin position="34"/>
        <end position="49"/>
    </location>
</feature>
<feature type="compositionally biased region" description="Acidic residues" evidence="2">
    <location>
        <begin position="87"/>
        <end position="97"/>
    </location>
</feature>
<feature type="compositionally biased region" description="Basic and acidic residues" evidence="2">
    <location>
        <begin position="138"/>
        <end position="151"/>
    </location>
</feature>
<feature type="compositionally biased region" description="Basic and acidic residues" evidence="2">
    <location>
        <begin position="181"/>
        <end position="194"/>
    </location>
</feature>
<feature type="compositionally biased region" description="Basic and acidic residues" evidence="2">
    <location>
        <begin position="401"/>
        <end position="417"/>
    </location>
</feature>
<feature type="modified residue" description="Phosphotyrosine" evidence="11">
    <location>
        <position position="185"/>
    </location>
</feature>
<name>IWS1_ARATH</name>
<keyword id="KW-0025">Alternative splicing</keyword>
<keyword id="KW-1070">Brassinosteroid signaling pathway</keyword>
<keyword id="KW-0539">Nucleus</keyword>
<keyword id="KW-0597">Phosphoprotein</keyword>
<keyword id="KW-1185">Reference proteome</keyword>
<keyword id="KW-0804">Transcription</keyword>
<keyword id="KW-0805">Transcription regulation</keyword>
<protein>
    <recommendedName>
        <fullName evidence="7">Protein IWS1 homolog 1</fullName>
        <shortName evidence="6">AtIWS1</shortName>
    </recommendedName>
    <alternativeName>
        <fullName evidence="7">Interacts with SPT6 protein 1</fullName>
    </alternativeName>
    <alternativeName>
        <fullName>Protein HIGH NITROGEN INSENSITIVE 9</fullName>
    </alternativeName>
    <alternativeName>
        <fullName evidence="7">Protein SUPPRESSOR OF BES-1-D 1</fullName>
    </alternativeName>
</protein>
<accession>F4ICK8</accession>
<accession>Q9FVQ8</accession>
<proteinExistence type="evidence at protein level"/>
<reference key="1">
    <citation type="journal article" date="2000" name="Nature">
        <title>Sequence and analysis of chromosome 1 of the plant Arabidopsis thaliana.</title>
        <authorList>
            <person name="Theologis A."/>
            <person name="Ecker J.R."/>
            <person name="Palm C.J."/>
            <person name="Federspiel N.A."/>
            <person name="Kaul S."/>
            <person name="White O."/>
            <person name="Alonso J."/>
            <person name="Altafi H."/>
            <person name="Araujo R."/>
            <person name="Bowman C.L."/>
            <person name="Brooks S.Y."/>
            <person name="Buehler E."/>
            <person name="Chan A."/>
            <person name="Chao Q."/>
            <person name="Chen H."/>
            <person name="Cheuk R.F."/>
            <person name="Chin C.W."/>
            <person name="Chung M.K."/>
            <person name="Conn L."/>
            <person name="Conway A.B."/>
            <person name="Conway A.R."/>
            <person name="Creasy T.H."/>
            <person name="Dewar K."/>
            <person name="Dunn P."/>
            <person name="Etgu P."/>
            <person name="Feldblyum T.V."/>
            <person name="Feng J.-D."/>
            <person name="Fong B."/>
            <person name="Fujii C.Y."/>
            <person name="Gill J.E."/>
            <person name="Goldsmith A.D."/>
            <person name="Haas B."/>
            <person name="Hansen N.F."/>
            <person name="Hughes B."/>
            <person name="Huizar L."/>
            <person name="Hunter J.L."/>
            <person name="Jenkins J."/>
            <person name="Johnson-Hopson C."/>
            <person name="Khan S."/>
            <person name="Khaykin E."/>
            <person name="Kim C.J."/>
            <person name="Koo H.L."/>
            <person name="Kremenetskaia I."/>
            <person name="Kurtz D.B."/>
            <person name="Kwan A."/>
            <person name="Lam B."/>
            <person name="Langin-Hooper S."/>
            <person name="Lee A."/>
            <person name="Lee J.M."/>
            <person name="Lenz C.A."/>
            <person name="Li J.H."/>
            <person name="Li Y.-P."/>
            <person name="Lin X."/>
            <person name="Liu S.X."/>
            <person name="Liu Z.A."/>
            <person name="Luros J.S."/>
            <person name="Maiti R."/>
            <person name="Marziali A."/>
            <person name="Militscher J."/>
            <person name="Miranda M."/>
            <person name="Nguyen M."/>
            <person name="Nierman W.C."/>
            <person name="Osborne B.I."/>
            <person name="Pai G."/>
            <person name="Peterson J."/>
            <person name="Pham P.K."/>
            <person name="Rizzo M."/>
            <person name="Rooney T."/>
            <person name="Rowley D."/>
            <person name="Sakano H."/>
            <person name="Salzberg S.L."/>
            <person name="Schwartz J.R."/>
            <person name="Shinn P."/>
            <person name="Southwick A.M."/>
            <person name="Sun H."/>
            <person name="Tallon L.J."/>
            <person name="Tambunga G."/>
            <person name="Toriumi M.J."/>
            <person name="Town C.D."/>
            <person name="Utterback T."/>
            <person name="Van Aken S."/>
            <person name="Vaysberg M."/>
            <person name="Vysotskaia V.S."/>
            <person name="Walker M."/>
            <person name="Wu D."/>
            <person name="Yu G."/>
            <person name="Fraser C.M."/>
            <person name="Venter J.C."/>
            <person name="Davis R.W."/>
        </authorList>
    </citation>
    <scope>NUCLEOTIDE SEQUENCE [LARGE SCALE GENOMIC DNA]</scope>
    <source>
        <strain>cv. Columbia</strain>
    </source>
</reference>
<reference key="2">
    <citation type="journal article" date="2017" name="Plant J.">
        <title>Araport11: a complete reannotation of the Arabidopsis thaliana reference genome.</title>
        <authorList>
            <person name="Cheng C.Y."/>
            <person name="Krishnakumar V."/>
            <person name="Chan A.P."/>
            <person name="Thibaud-Nissen F."/>
            <person name="Schobel S."/>
            <person name="Town C.D."/>
        </authorList>
    </citation>
    <scope>GENOME REANNOTATION</scope>
    <source>
        <strain>cv. Columbia</strain>
    </source>
</reference>
<reference key="3">
    <citation type="journal article" date="2009" name="J. Proteomics">
        <title>Phosphoproteomic analysis of nuclei-enriched fractions from Arabidopsis thaliana.</title>
        <authorList>
            <person name="Jones A.M.E."/>
            <person name="MacLean D."/>
            <person name="Studholme D.J."/>
            <person name="Serna-Sanz A."/>
            <person name="Andreasson E."/>
            <person name="Rathjen J.P."/>
            <person name="Peck S.C."/>
        </authorList>
    </citation>
    <scope>PHOSPHORYLATION [LARGE SCALE ANALYSIS] AT TYR-185</scope>
    <scope>IDENTIFICATION BY MASS SPECTROMETRY [LARGE SCALE ANALYSIS]</scope>
    <source>
        <strain>cv. Columbia</strain>
    </source>
</reference>
<reference key="4">
    <citation type="journal article" date="2009" name="Plant Physiol.">
        <title>Large-scale Arabidopsis phosphoproteome profiling reveals novel chloroplast kinase substrates and phosphorylation networks.</title>
        <authorList>
            <person name="Reiland S."/>
            <person name="Messerli G."/>
            <person name="Baerenfaller K."/>
            <person name="Gerrits B."/>
            <person name="Endler A."/>
            <person name="Grossmann J."/>
            <person name="Gruissem W."/>
            <person name="Baginsky S."/>
        </authorList>
    </citation>
    <scope>IDENTIFICATION BY MASS SPECTROMETRY [LARGE SCALE ANALYSIS]</scope>
</reference>
<reference key="5">
    <citation type="journal article" date="2010" name="Proc. Natl. Acad. Sci. U.S.A.">
        <title>Arabidopsis IWS1 interacts with transcription factor BES1 and is involved in plant steroid hormone brassinosteroid regulated gene expression.</title>
        <authorList>
            <person name="Li L."/>
            <person name="Ye H."/>
            <person name="Guo H."/>
            <person name="Yin Y."/>
        </authorList>
    </citation>
    <scope>FUNCTION</scope>
    <scope>INTERACTION WITH BZR2/BES1 AND SPT6</scope>
    <scope>SUBCELLULAR LOCATION</scope>
    <scope>DISRUPTION PHENOTYPE</scope>
    <source>
        <strain>cv. En-2</strain>
    </source>
</reference>
<reference key="6">
    <citation type="journal article" date="2011" name="Proc. Natl. Acad. Sci. U.S.A.">
        <title>High nitrogen insensitive 9 (HNI9)-mediated systemic repression of root NO3- uptake is associated with changes in histone methylation.</title>
        <authorList>
            <person name="Widiez T."/>
            <person name="El Kafafi E.S."/>
            <person name="Girin T."/>
            <person name="Berr A."/>
            <person name="Ruffel S."/>
            <person name="Krouk G."/>
            <person name="Vayssieres A."/>
            <person name="Shen W.H."/>
            <person name="Coruzzi G.M."/>
            <person name="Gojon A."/>
            <person name="Lepetit M."/>
        </authorList>
    </citation>
    <scope>FUNCTION</scope>
</reference>
<reference key="7">
    <citation type="journal article" date="2014" name="Mol. Plant">
        <title>Histone lysine methyltransferase SDG8 is involved in brassinosteroid-regulated gene expression in Arabidopsis thaliana.</title>
        <authorList>
            <person name="Wang X."/>
            <person name="Chen J."/>
            <person name="Xie Z."/>
            <person name="Liu S."/>
            <person name="Nolan T."/>
            <person name="Ye H."/>
            <person name="Zhang M."/>
            <person name="Guo H."/>
            <person name="Schnable P.S."/>
            <person name="Li Z."/>
            <person name="Yin Y."/>
        </authorList>
    </citation>
    <scope>INTERACTION WITH ASHH2/SDG8</scope>
    <scope>SUBCELLULAR LOCATION</scope>
</reference>
<comment type="function">
    <text evidence="3 4">Transcription factor involved in RNA polymerase II (RNAPII) transcription regulation. Involved in transcription elongation. May function at post-recruitment and elongation steps of transcription. May be recruited by BZR2/BES1 to target genes and promote their expression during transcription elongation process. Required for brassinosteroid (BR)-induced gene expression (PubMed:20139304). Required the for regulation of numerous nitrogen-responsive genes in roots. Acts in roots to repress NRT2.1 transcription in response to high nitrogen supply. This repression is associated with an IWS1-dependent increase of trimethylation on 'Lys-27' H3K27me3 at the NRT2.1 locus (PubMed:21788519).</text>
</comment>
<comment type="subunit">
    <text evidence="3 5">Interacts with BZR2/BES1 and SPT6 (via N-terminus) (PubMed:20139304). Interacts with ASHH2/SDG8 (PubMed:24838002).</text>
</comment>
<comment type="subcellular location">
    <subcellularLocation>
        <location evidence="1 3 5">Nucleus</location>
    </subcellularLocation>
</comment>
<comment type="alternative products">
    <event type="alternative splicing"/>
    <isoform>
        <id>F4ICK8-1</id>
        <name>1</name>
        <sequence type="displayed"/>
    </isoform>
    <text evidence="7">A number of isoforms are produced. According to EST sequences.</text>
</comment>
<comment type="disruption phenotype">
    <text evidence="3">Semi-dwarf phenotype. Stunted growth characterized by reduced leaf petiole lengths and small leaves. Altered responses to brassinosteroid (BR).</text>
</comment>
<comment type="similarity">
    <text evidence="7">Belongs to the IWS1 family.</text>
</comment>
<comment type="sequence caution" evidence="7">
    <conflict type="erroneous gene model prediction">
        <sequence resource="EMBL-CDS" id="AAG23443"/>
    </conflict>
</comment>
<organism>
    <name type="scientific">Arabidopsis thaliana</name>
    <name type="common">Mouse-ear cress</name>
    <dbReference type="NCBI Taxonomy" id="3702"/>
    <lineage>
        <taxon>Eukaryota</taxon>
        <taxon>Viridiplantae</taxon>
        <taxon>Streptophyta</taxon>
        <taxon>Embryophyta</taxon>
        <taxon>Tracheophyta</taxon>
        <taxon>Spermatophyta</taxon>
        <taxon>Magnoliopsida</taxon>
        <taxon>eudicotyledons</taxon>
        <taxon>Gunneridae</taxon>
        <taxon>Pentapetalae</taxon>
        <taxon>rosids</taxon>
        <taxon>malvids</taxon>
        <taxon>Brassicales</taxon>
        <taxon>Brassicaceae</taxon>
        <taxon>Camelineae</taxon>
        <taxon>Arabidopsis</taxon>
    </lineage>
</organism>
<sequence>MGFEDDPYRDVDGEPIVDFDDFGNDREPSTEPLQDFDEDLADDIGDWDGEGSQTPVYDNDKVAKPRKRLVKKSSSERVTIDVPELIDEDVDDAEFDEFMGGRGGGSTDYDDKVGRKRKKEKERSSSGSGKEKRHKFPNRGERKSEEIDEMWKSIAHNPENDEEGVRTMDDDNFIDDTGLDPSERYGGDAGDRSPTHYPQAEEGEDEDEVNNLFKMGKKKKKTERNPAEIALLVENVMAELEVTAEEDAELNRQGKPAINKLKKLSLLTDVLGKKQLQTEFLDHGVLTLLKNWLEPLPDGSLPNINIRAAILRVLTDFPIDLDQYDRREQLKKSGLGKVIMFLSKSDEETNSNRRLAKDLVDKWSRPIFNKSTRFEDMRNLDEDRVPYRRPPVKKPSNKATMESRDGDFDLEIRERKTGLTSGQSSRGDRQMTMRPEATPLDFLIRPQSKIDPDEIIARAKQVSQDQRRVKMNKKLQQLKGTKKKRLQATKVSVEGRGMIKYL</sequence>
<evidence type="ECO:0000255" key="1">
    <source>
        <dbReference type="PROSITE-ProRule" id="PRU00649"/>
    </source>
</evidence>
<evidence type="ECO:0000256" key="2">
    <source>
        <dbReference type="SAM" id="MobiDB-lite"/>
    </source>
</evidence>
<evidence type="ECO:0000269" key="3">
    <source>
    </source>
</evidence>
<evidence type="ECO:0000269" key="4">
    <source>
    </source>
</evidence>
<evidence type="ECO:0000269" key="5">
    <source>
    </source>
</evidence>
<evidence type="ECO:0000303" key="6">
    <source>
    </source>
</evidence>
<evidence type="ECO:0000305" key="7"/>
<evidence type="ECO:0000312" key="8">
    <source>
        <dbReference type="Araport" id="AT1G32130"/>
    </source>
</evidence>
<evidence type="ECO:0000312" key="9">
    <source>
        <dbReference type="EMBL" id="AAG23443.1"/>
    </source>
</evidence>
<evidence type="ECO:0000312" key="10">
    <source>
        <dbReference type="EMBL" id="AEE31438.1"/>
    </source>
</evidence>
<evidence type="ECO:0007744" key="11">
    <source>
    </source>
</evidence>
<dbReference type="EMBL" id="AC084165">
    <property type="protein sequence ID" value="AAG23443.1"/>
    <property type="status" value="ALT_SEQ"/>
    <property type="molecule type" value="Genomic_DNA"/>
</dbReference>
<dbReference type="EMBL" id="CP002684">
    <property type="protein sequence ID" value="AEE31438.1"/>
    <property type="molecule type" value="Genomic_DNA"/>
</dbReference>
<dbReference type="PIR" id="F86445">
    <property type="entry name" value="F86445"/>
</dbReference>
<dbReference type="RefSeq" id="NP_174492.2">
    <molecule id="F4ICK8-1"/>
    <property type="nucleotide sequence ID" value="NM_102946.4"/>
</dbReference>
<dbReference type="SMR" id="F4ICK8"/>
<dbReference type="FunCoup" id="F4ICK8">
    <property type="interactions" value="2891"/>
</dbReference>
<dbReference type="STRING" id="3702.F4ICK8"/>
<dbReference type="iPTMnet" id="F4ICK8"/>
<dbReference type="PaxDb" id="3702-AT1G32130.1"/>
<dbReference type="ProteomicsDB" id="238963">
    <molecule id="F4ICK8-1"/>
</dbReference>
<dbReference type="EnsemblPlants" id="AT1G32130.1">
    <molecule id="F4ICK8-1"/>
    <property type="protein sequence ID" value="AT1G32130.1"/>
    <property type="gene ID" value="AT1G32130"/>
</dbReference>
<dbReference type="GeneID" id="840105"/>
<dbReference type="Gramene" id="AT1G32130.1">
    <molecule id="F4ICK8-1"/>
    <property type="protein sequence ID" value="AT1G32130.1"/>
    <property type="gene ID" value="AT1G32130"/>
</dbReference>
<dbReference type="KEGG" id="ath:AT1G32130"/>
<dbReference type="Araport" id="AT1G32130"/>
<dbReference type="TAIR" id="AT1G32130">
    <property type="gene designation" value="IWS1"/>
</dbReference>
<dbReference type="eggNOG" id="KOG1793">
    <property type="taxonomic scope" value="Eukaryota"/>
</dbReference>
<dbReference type="HOGENOM" id="CLU_040584_2_1_1"/>
<dbReference type="InParanoid" id="F4ICK8"/>
<dbReference type="OMA" id="WDGQGSQ"/>
<dbReference type="CD-CODE" id="4299E36E">
    <property type="entry name" value="Nucleolus"/>
</dbReference>
<dbReference type="PRO" id="PR:F4ICK8"/>
<dbReference type="Proteomes" id="UP000006548">
    <property type="component" value="Chromosome 1"/>
</dbReference>
<dbReference type="ExpressionAtlas" id="F4ICK8">
    <property type="expression patterns" value="baseline and differential"/>
</dbReference>
<dbReference type="GO" id="GO:0005634">
    <property type="term" value="C:nucleus"/>
    <property type="evidence" value="ECO:0000314"/>
    <property type="project" value="UniProtKB"/>
</dbReference>
<dbReference type="GO" id="GO:0009742">
    <property type="term" value="P:brassinosteroid mediated signaling pathway"/>
    <property type="evidence" value="ECO:0000315"/>
    <property type="project" value="TAIR"/>
</dbReference>
<dbReference type="GO" id="GO:0032784">
    <property type="term" value="P:regulation of DNA-templated transcription elongation"/>
    <property type="evidence" value="ECO:0000304"/>
    <property type="project" value="TAIR"/>
</dbReference>
<dbReference type="FunFam" id="1.20.930.10:FF:000012">
    <property type="entry name" value="Protein IWS1 homolog 1"/>
    <property type="match status" value="1"/>
</dbReference>
<dbReference type="Gene3D" id="1.20.930.10">
    <property type="entry name" value="Conserved domain common to transcription factors TFIIS, elongin A, CRSP70"/>
    <property type="match status" value="1"/>
</dbReference>
<dbReference type="InterPro" id="IPR044204">
    <property type="entry name" value="IWS1/2"/>
</dbReference>
<dbReference type="InterPro" id="IPR035441">
    <property type="entry name" value="TFIIS/LEDGF_dom_sf"/>
</dbReference>
<dbReference type="InterPro" id="IPR017923">
    <property type="entry name" value="TFIIS_N"/>
</dbReference>
<dbReference type="PANTHER" id="PTHR47350">
    <property type="entry name" value="PROTEIN IWS1 HOMOLOG 1"/>
    <property type="match status" value="1"/>
</dbReference>
<dbReference type="PANTHER" id="PTHR47350:SF4">
    <property type="entry name" value="PROTEIN IWS1 HOMOLOG 1"/>
    <property type="match status" value="1"/>
</dbReference>
<dbReference type="Pfam" id="PF08711">
    <property type="entry name" value="Med26"/>
    <property type="match status" value="1"/>
</dbReference>
<dbReference type="PROSITE" id="PS51319">
    <property type="entry name" value="TFIIS_N"/>
    <property type="match status" value="1"/>
</dbReference>